<accession>A0PY66</accession>
<reference key="1">
    <citation type="journal article" date="2006" name="Nat. Biotechnol.">
        <title>The genome and transcriptomes of the anti-tumor agent Clostridium novyi-NT.</title>
        <authorList>
            <person name="Bettegowda C."/>
            <person name="Huang X."/>
            <person name="Lin J."/>
            <person name="Cheong I."/>
            <person name="Kohli M."/>
            <person name="Szabo S.A."/>
            <person name="Zhang X."/>
            <person name="Diaz L.A. Jr."/>
            <person name="Velculescu V.E."/>
            <person name="Parmigiani G."/>
            <person name="Kinzler K.W."/>
            <person name="Vogelstein B."/>
            <person name="Zhou S."/>
        </authorList>
    </citation>
    <scope>NUCLEOTIDE SEQUENCE [LARGE SCALE GENOMIC DNA]</scope>
    <source>
        <strain>NT</strain>
    </source>
</reference>
<feature type="chain" id="PRO_0000379179" description="ATP-dependent helicase/deoxyribonuclease subunit B">
    <location>
        <begin position="1"/>
        <end position="1134"/>
    </location>
</feature>
<feature type="binding site" evidence="1">
    <location>
        <begin position="8"/>
        <end position="15"/>
    </location>
    <ligand>
        <name>ATP</name>
        <dbReference type="ChEBI" id="CHEBI:30616"/>
    </ligand>
</feature>
<feature type="binding site" evidence="1">
    <location>
        <position position="771"/>
    </location>
    <ligand>
        <name>[4Fe-4S] cluster</name>
        <dbReference type="ChEBI" id="CHEBI:49883"/>
    </ligand>
</feature>
<feature type="binding site" evidence="1">
    <location>
        <position position="1089"/>
    </location>
    <ligand>
        <name>[4Fe-4S] cluster</name>
        <dbReference type="ChEBI" id="CHEBI:49883"/>
    </ligand>
</feature>
<feature type="binding site" evidence="1">
    <location>
        <position position="1092"/>
    </location>
    <ligand>
        <name>[4Fe-4S] cluster</name>
        <dbReference type="ChEBI" id="CHEBI:49883"/>
    </ligand>
</feature>
<feature type="binding site" evidence="1">
    <location>
        <position position="1098"/>
    </location>
    <ligand>
        <name>[4Fe-4S] cluster</name>
        <dbReference type="ChEBI" id="CHEBI:49883"/>
    </ligand>
</feature>
<comment type="function">
    <text evidence="1">The heterodimer acts as both an ATP-dependent DNA helicase and an ATP-dependent, dual-direction single-stranded exonuclease. Recognizes the chi site generating a DNA molecule suitable for the initiation of homologous recombination. The AddB subunit has 5' -&gt; 3' nuclease activity but not helicase activity.</text>
</comment>
<comment type="cofactor">
    <cofactor evidence="1">
        <name>Mg(2+)</name>
        <dbReference type="ChEBI" id="CHEBI:18420"/>
    </cofactor>
</comment>
<comment type="cofactor">
    <cofactor evidence="1">
        <name>[4Fe-4S] cluster</name>
        <dbReference type="ChEBI" id="CHEBI:49883"/>
    </cofactor>
    <text evidence="1">Binds 1 [4Fe-4S] cluster.</text>
</comment>
<comment type="subunit">
    <text evidence="1">Heterodimer of AddA and AddB.</text>
</comment>
<comment type="miscellaneous">
    <text evidence="1">Despite having conserved helicase domains, this subunit does not have helicase activity.</text>
</comment>
<comment type="similarity">
    <text evidence="1">Belongs to the helicase family. AddB/RexB type 1 subfamily.</text>
</comment>
<gene>
    <name evidence="1" type="primary">addB</name>
    <name type="ordered locus">NT01CX_1235</name>
</gene>
<organism>
    <name type="scientific">Clostridium novyi (strain NT)</name>
    <dbReference type="NCBI Taxonomy" id="386415"/>
    <lineage>
        <taxon>Bacteria</taxon>
        <taxon>Bacillati</taxon>
        <taxon>Bacillota</taxon>
        <taxon>Clostridia</taxon>
        <taxon>Eubacteriales</taxon>
        <taxon>Clostridiaceae</taxon>
        <taxon>Clostridium</taxon>
    </lineage>
</organism>
<dbReference type="EC" id="3.1.-.-" evidence="1"/>
<dbReference type="EMBL" id="CP000382">
    <property type="protein sequence ID" value="ABK61063.1"/>
    <property type="molecule type" value="Genomic_DNA"/>
</dbReference>
<dbReference type="RefSeq" id="WP_011721326.1">
    <property type="nucleotide sequence ID" value="NC_008593.1"/>
</dbReference>
<dbReference type="SMR" id="A0PY66"/>
<dbReference type="STRING" id="386415.NT01CX_1235"/>
<dbReference type="KEGG" id="cno:NT01CX_1235"/>
<dbReference type="eggNOG" id="COG3857">
    <property type="taxonomic scope" value="Bacteria"/>
</dbReference>
<dbReference type="HOGENOM" id="CLU_007838_0_0_9"/>
<dbReference type="Proteomes" id="UP000008220">
    <property type="component" value="Chromosome"/>
</dbReference>
<dbReference type="GO" id="GO:0051539">
    <property type="term" value="F:4 iron, 4 sulfur cluster binding"/>
    <property type="evidence" value="ECO:0007669"/>
    <property type="project" value="UniProtKB-KW"/>
</dbReference>
<dbReference type="GO" id="GO:0008409">
    <property type="term" value="F:5'-3' exonuclease activity"/>
    <property type="evidence" value="ECO:0007669"/>
    <property type="project" value="UniProtKB-UniRule"/>
</dbReference>
<dbReference type="GO" id="GO:0005524">
    <property type="term" value="F:ATP binding"/>
    <property type="evidence" value="ECO:0007669"/>
    <property type="project" value="UniProtKB-UniRule"/>
</dbReference>
<dbReference type="GO" id="GO:0003690">
    <property type="term" value="F:double-stranded DNA binding"/>
    <property type="evidence" value="ECO:0007669"/>
    <property type="project" value="UniProtKB-UniRule"/>
</dbReference>
<dbReference type="GO" id="GO:0004386">
    <property type="term" value="F:helicase activity"/>
    <property type="evidence" value="ECO:0007669"/>
    <property type="project" value="UniProtKB-KW"/>
</dbReference>
<dbReference type="GO" id="GO:0046872">
    <property type="term" value="F:metal ion binding"/>
    <property type="evidence" value="ECO:0007669"/>
    <property type="project" value="UniProtKB-KW"/>
</dbReference>
<dbReference type="GO" id="GO:0000724">
    <property type="term" value="P:double-strand break repair via homologous recombination"/>
    <property type="evidence" value="ECO:0007669"/>
    <property type="project" value="UniProtKB-UniRule"/>
</dbReference>
<dbReference type="Gene3D" id="3.90.320.10">
    <property type="match status" value="1"/>
</dbReference>
<dbReference type="Gene3D" id="6.10.140.1030">
    <property type="match status" value="1"/>
</dbReference>
<dbReference type="Gene3D" id="3.40.50.300">
    <property type="entry name" value="P-loop containing nucleotide triphosphate hydrolases"/>
    <property type="match status" value="3"/>
</dbReference>
<dbReference type="HAMAP" id="MF_01452">
    <property type="entry name" value="AddB_type1"/>
    <property type="match status" value="1"/>
</dbReference>
<dbReference type="InterPro" id="IPR049035">
    <property type="entry name" value="ADDB_N"/>
</dbReference>
<dbReference type="InterPro" id="IPR014140">
    <property type="entry name" value="DNA_helicase_suAddB"/>
</dbReference>
<dbReference type="InterPro" id="IPR027417">
    <property type="entry name" value="P-loop_NTPase"/>
</dbReference>
<dbReference type="InterPro" id="IPR011604">
    <property type="entry name" value="PDDEXK-like_dom_sf"/>
</dbReference>
<dbReference type="InterPro" id="IPR038726">
    <property type="entry name" value="PDDEXK_AddAB-type"/>
</dbReference>
<dbReference type="NCBIfam" id="TIGR02773">
    <property type="entry name" value="addB_Gpos"/>
    <property type="match status" value="1"/>
</dbReference>
<dbReference type="PANTHER" id="PTHR30591">
    <property type="entry name" value="RECBCD ENZYME SUBUNIT RECC"/>
    <property type="match status" value="1"/>
</dbReference>
<dbReference type="PANTHER" id="PTHR30591:SF1">
    <property type="entry name" value="RECBCD ENZYME SUBUNIT RECC"/>
    <property type="match status" value="1"/>
</dbReference>
<dbReference type="Pfam" id="PF21445">
    <property type="entry name" value="ADDB_N"/>
    <property type="match status" value="1"/>
</dbReference>
<dbReference type="Pfam" id="PF12705">
    <property type="entry name" value="PDDEXK_1"/>
    <property type="match status" value="1"/>
</dbReference>
<dbReference type="SUPFAM" id="SSF52540">
    <property type="entry name" value="P-loop containing nucleoside triphosphate hydrolases"/>
    <property type="match status" value="2"/>
</dbReference>
<proteinExistence type="inferred from homology"/>
<protein>
    <recommendedName>
        <fullName evidence="1">ATP-dependent helicase/deoxyribonuclease subunit B</fullName>
        <ecNumber evidence="1">3.1.-.-</ecNumber>
    </recommendedName>
    <alternativeName>
        <fullName evidence="1">ATP-dependent helicase/nuclease subunit AddB</fullName>
    </alternativeName>
</protein>
<keyword id="KW-0004">4Fe-4S</keyword>
<keyword id="KW-0067">ATP-binding</keyword>
<keyword id="KW-0227">DNA damage</keyword>
<keyword id="KW-0234">DNA repair</keyword>
<keyword id="KW-0238">DNA-binding</keyword>
<keyword id="KW-0269">Exonuclease</keyword>
<keyword id="KW-0347">Helicase</keyword>
<keyword id="KW-0378">Hydrolase</keyword>
<keyword id="KW-0408">Iron</keyword>
<keyword id="KW-0411">Iron-sulfur</keyword>
<keyword id="KW-0479">Metal-binding</keyword>
<keyword id="KW-0540">Nuclease</keyword>
<keyword id="KW-0547">Nucleotide-binding</keyword>
<keyword id="KW-1185">Reference proteome</keyword>
<evidence type="ECO:0000255" key="1">
    <source>
        <dbReference type="HAMAP-Rule" id="MF_01452"/>
    </source>
</evidence>
<name>ADDB_CLONN</name>
<sequence>MSFRFIYGRAGSGKSKFCIDDIEKRLQEDTNKQLILIVPEQFSFQAEKSVVEKVKGTGITNVKVTSFERIAYDVFNEVGGSTHKIINSSGKLMLIFNIINNLKDELKVFATAANQEGFVNNISDIITELKRYDVTATELRATLNLIEDEFLKDKINDISYIFEQFQESLHKNYIDSEDELTLLYRKIDTSKMFDGAEVWIDEFSSFTPQQYKILEKLMEKASRVNITLCMDYYRVIDGTDVFAPTKRTEEKLREILKEKDVKLDKPIILNNDDVNRFKDSSELKYLEENYFKYPYKPYDKTTDDIKIIRALNPYSEVENIAKEIAKISMESNIRYRDIAVITRDLEGYEKIVKTIFDEYEIPYFIDKKKEIDDNPLIVLITSVIEIFNKSWSYEAMFRYLKTGLSNVSKEEVDLLENYVLAYGIRGKKKWQSPWEYGNENILEKINEIRIKVSEPLIKFSSKLKGKSKADEICSAVYNFLCSIGVNETIEKWVYKFKNEGNQALAKEYSQIWNMVIELLDQVVEVFKEEELQLKDFVKILSLGFKDYKMGLIPPSLDQVLVSDVERVRTHEIKLLYIIGVNDGIFPAVSKDEGILSDSDRGSLKKIGIEIAEDTKSKAFEEQYLIYRTLTTTQKYLRICYSIADYEGKALRPSIIVSRFKSLFPKIAEESDNIAMDYEEENIDLISREIPTFNNLVSVLRREDNKVKVSPFWSDVYKWYSENPRWKETLDTVFSAISYTNAVDDISEEKIRKMYGNKLYLTVSRLEKYAQCPFGYYIKYGLKAKERKIFALTPPDLGTFMHNVIDEFSEVVDKSGFKWYEIEDKWCKDTVSEIVDRKAEESAGGIFTSSARYKYFTERLKRVLIKTILVIIEHLKRSGFQPIGHEVGFGNDEKYPPIEIELSSGEKVKLIGRIDRVDKLDMEKKDYYRIIDYKSGNKDFSLSDVYYGLQLQLLTYLDAILTNEELKDREEALPGGVLYLKIDDPIIKGKRNLSEEEIQDEIMKALKMKGLLLADEEVVKEMDRKIEGNSLIIPARINKDGSLGKSSVGTEEQFRLLREHVKKNLIKACEDMLKGDIKIRPIRSKNADACTYCLYSSICEFDTNFEDNEFKVVQEKKDEEVWELLRKEGEESWEK</sequence>